<accession>A4XXP5</accession>
<keyword id="KW-0067">ATP-binding</keyword>
<keyword id="KW-0963">Cytoplasm</keyword>
<keyword id="KW-0418">Kinase</keyword>
<keyword id="KW-0545">Nucleotide biosynthesis</keyword>
<keyword id="KW-0547">Nucleotide-binding</keyword>
<keyword id="KW-0808">Transferase</keyword>
<organism>
    <name type="scientific">Ectopseudomonas mendocina (strain ymp)</name>
    <name type="common">Pseudomonas mendocina</name>
    <dbReference type="NCBI Taxonomy" id="399739"/>
    <lineage>
        <taxon>Bacteria</taxon>
        <taxon>Pseudomonadati</taxon>
        <taxon>Pseudomonadota</taxon>
        <taxon>Gammaproteobacteria</taxon>
        <taxon>Pseudomonadales</taxon>
        <taxon>Pseudomonadaceae</taxon>
        <taxon>Ectopseudomonas</taxon>
    </lineage>
</organism>
<reference key="1">
    <citation type="submission" date="2007-04" db="EMBL/GenBank/DDBJ databases">
        <title>Complete sequence of Pseudomonas mendocina ymp.</title>
        <authorList>
            <consortium name="US DOE Joint Genome Institute"/>
            <person name="Copeland A."/>
            <person name="Lucas S."/>
            <person name="Lapidus A."/>
            <person name="Barry K."/>
            <person name="Glavina del Rio T."/>
            <person name="Dalin E."/>
            <person name="Tice H."/>
            <person name="Pitluck S."/>
            <person name="Kiss H."/>
            <person name="Brettin T."/>
            <person name="Detter J.C."/>
            <person name="Bruce D."/>
            <person name="Han C."/>
            <person name="Schmutz J."/>
            <person name="Larimer F."/>
            <person name="Land M."/>
            <person name="Hauser L."/>
            <person name="Kyrpides N."/>
            <person name="Mikhailova N."/>
            <person name="Hersman L."/>
            <person name="Dubois J."/>
            <person name="Maurice P."/>
            <person name="Richardson P."/>
        </authorList>
    </citation>
    <scope>NUCLEOTIDE SEQUENCE [LARGE SCALE GENOMIC DNA]</scope>
    <source>
        <strain>ymp</strain>
    </source>
</reference>
<evidence type="ECO:0000255" key="1">
    <source>
        <dbReference type="HAMAP-Rule" id="MF_00235"/>
    </source>
</evidence>
<name>KAD_ECTM1</name>
<comment type="function">
    <text evidence="1">Catalyzes the reversible transfer of the terminal phosphate group between ATP and AMP. Plays an important role in cellular energy homeostasis and in adenine nucleotide metabolism.</text>
</comment>
<comment type="catalytic activity">
    <reaction evidence="1">
        <text>AMP + ATP = 2 ADP</text>
        <dbReference type="Rhea" id="RHEA:12973"/>
        <dbReference type="ChEBI" id="CHEBI:30616"/>
        <dbReference type="ChEBI" id="CHEBI:456215"/>
        <dbReference type="ChEBI" id="CHEBI:456216"/>
        <dbReference type="EC" id="2.7.4.3"/>
    </reaction>
</comment>
<comment type="pathway">
    <text evidence="1">Purine metabolism; AMP biosynthesis via salvage pathway; AMP from ADP: step 1/1.</text>
</comment>
<comment type="subunit">
    <text evidence="1">Monomer.</text>
</comment>
<comment type="subcellular location">
    <subcellularLocation>
        <location evidence="1">Cytoplasm</location>
    </subcellularLocation>
</comment>
<comment type="domain">
    <text evidence="1">Consists of three domains, a large central CORE domain and two small peripheral domains, NMPbind and LID, which undergo movements during catalysis. The LID domain closes over the site of phosphoryl transfer upon ATP binding. Assembling and dissambling the active center during each catalytic cycle provides an effective means to prevent ATP hydrolysis.</text>
</comment>
<comment type="similarity">
    <text evidence="1">Belongs to the adenylate kinase family.</text>
</comment>
<dbReference type="EC" id="2.7.4.3" evidence="1"/>
<dbReference type="EMBL" id="CP000680">
    <property type="protein sequence ID" value="ABP86111.1"/>
    <property type="molecule type" value="Genomic_DNA"/>
</dbReference>
<dbReference type="SMR" id="A4XXP5"/>
<dbReference type="STRING" id="399739.Pmen_3359"/>
<dbReference type="KEGG" id="pmy:Pmen_3359"/>
<dbReference type="PATRIC" id="fig|399739.8.peg.3409"/>
<dbReference type="eggNOG" id="COG0563">
    <property type="taxonomic scope" value="Bacteria"/>
</dbReference>
<dbReference type="HOGENOM" id="CLU_032354_1_2_6"/>
<dbReference type="OrthoDB" id="9805030at2"/>
<dbReference type="UniPathway" id="UPA00588">
    <property type="reaction ID" value="UER00649"/>
</dbReference>
<dbReference type="GO" id="GO:0005737">
    <property type="term" value="C:cytoplasm"/>
    <property type="evidence" value="ECO:0007669"/>
    <property type="project" value="UniProtKB-SubCell"/>
</dbReference>
<dbReference type="GO" id="GO:0004017">
    <property type="term" value="F:adenylate kinase activity"/>
    <property type="evidence" value="ECO:0007669"/>
    <property type="project" value="UniProtKB-UniRule"/>
</dbReference>
<dbReference type="GO" id="GO:0005524">
    <property type="term" value="F:ATP binding"/>
    <property type="evidence" value="ECO:0007669"/>
    <property type="project" value="UniProtKB-UniRule"/>
</dbReference>
<dbReference type="GO" id="GO:0044209">
    <property type="term" value="P:AMP salvage"/>
    <property type="evidence" value="ECO:0007669"/>
    <property type="project" value="UniProtKB-UniRule"/>
</dbReference>
<dbReference type="CDD" id="cd01428">
    <property type="entry name" value="ADK"/>
    <property type="match status" value="1"/>
</dbReference>
<dbReference type="FunFam" id="3.40.50.300:FF:000106">
    <property type="entry name" value="Adenylate kinase mitochondrial"/>
    <property type="match status" value="1"/>
</dbReference>
<dbReference type="Gene3D" id="3.40.50.300">
    <property type="entry name" value="P-loop containing nucleotide triphosphate hydrolases"/>
    <property type="match status" value="1"/>
</dbReference>
<dbReference type="HAMAP" id="MF_00235">
    <property type="entry name" value="Adenylate_kinase_Adk"/>
    <property type="match status" value="1"/>
</dbReference>
<dbReference type="InterPro" id="IPR006259">
    <property type="entry name" value="Adenyl_kin_sub"/>
</dbReference>
<dbReference type="InterPro" id="IPR000850">
    <property type="entry name" value="Adenylat/UMP-CMP_kin"/>
</dbReference>
<dbReference type="InterPro" id="IPR033690">
    <property type="entry name" value="Adenylat_kinase_CS"/>
</dbReference>
<dbReference type="InterPro" id="IPR007862">
    <property type="entry name" value="Adenylate_kinase_lid-dom"/>
</dbReference>
<dbReference type="InterPro" id="IPR027417">
    <property type="entry name" value="P-loop_NTPase"/>
</dbReference>
<dbReference type="NCBIfam" id="TIGR01351">
    <property type="entry name" value="adk"/>
    <property type="match status" value="1"/>
</dbReference>
<dbReference type="NCBIfam" id="NF001379">
    <property type="entry name" value="PRK00279.1-1"/>
    <property type="match status" value="1"/>
</dbReference>
<dbReference type="NCBIfam" id="NF001380">
    <property type="entry name" value="PRK00279.1-2"/>
    <property type="match status" value="1"/>
</dbReference>
<dbReference type="NCBIfam" id="NF001381">
    <property type="entry name" value="PRK00279.1-3"/>
    <property type="match status" value="1"/>
</dbReference>
<dbReference type="NCBIfam" id="NF011100">
    <property type="entry name" value="PRK14527.1"/>
    <property type="match status" value="1"/>
</dbReference>
<dbReference type="PANTHER" id="PTHR23359">
    <property type="entry name" value="NUCLEOTIDE KINASE"/>
    <property type="match status" value="1"/>
</dbReference>
<dbReference type="Pfam" id="PF00406">
    <property type="entry name" value="ADK"/>
    <property type="match status" value="1"/>
</dbReference>
<dbReference type="Pfam" id="PF05191">
    <property type="entry name" value="ADK_lid"/>
    <property type="match status" value="1"/>
</dbReference>
<dbReference type="PRINTS" id="PR00094">
    <property type="entry name" value="ADENYLTKNASE"/>
</dbReference>
<dbReference type="SUPFAM" id="SSF52540">
    <property type="entry name" value="P-loop containing nucleoside triphosphate hydrolases"/>
    <property type="match status" value="1"/>
</dbReference>
<dbReference type="PROSITE" id="PS00113">
    <property type="entry name" value="ADENYLATE_KINASE"/>
    <property type="match status" value="1"/>
</dbReference>
<protein>
    <recommendedName>
        <fullName evidence="1">Adenylate kinase</fullName>
        <shortName evidence="1">AK</shortName>
        <ecNumber evidence="1">2.7.4.3</ecNumber>
    </recommendedName>
    <alternativeName>
        <fullName evidence="1">ATP-AMP transphosphorylase</fullName>
    </alternativeName>
    <alternativeName>
        <fullName evidence="1">ATP:AMP phosphotransferase</fullName>
    </alternativeName>
    <alternativeName>
        <fullName evidence="1">Adenylate monophosphate kinase</fullName>
    </alternativeName>
</protein>
<gene>
    <name evidence="1" type="primary">adk</name>
    <name type="ordered locus">Pmen_3359</name>
</gene>
<proteinExistence type="inferred from homology"/>
<feature type="chain" id="PRO_1000058884" description="Adenylate kinase">
    <location>
        <begin position="1"/>
        <end position="215"/>
    </location>
</feature>
<feature type="region of interest" description="NMP" evidence="1">
    <location>
        <begin position="30"/>
        <end position="59"/>
    </location>
</feature>
<feature type="region of interest" description="LID" evidence="1">
    <location>
        <begin position="122"/>
        <end position="159"/>
    </location>
</feature>
<feature type="binding site" evidence="1">
    <location>
        <begin position="10"/>
        <end position="15"/>
    </location>
    <ligand>
        <name>ATP</name>
        <dbReference type="ChEBI" id="CHEBI:30616"/>
    </ligand>
</feature>
<feature type="binding site" evidence="1">
    <location>
        <position position="31"/>
    </location>
    <ligand>
        <name>AMP</name>
        <dbReference type="ChEBI" id="CHEBI:456215"/>
    </ligand>
</feature>
<feature type="binding site" evidence="1">
    <location>
        <position position="36"/>
    </location>
    <ligand>
        <name>AMP</name>
        <dbReference type="ChEBI" id="CHEBI:456215"/>
    </ligand>
</feature>
<feature type="binding site" evidence="1">
    <location>
        <begin position="57"/>
        <end position="59"/>
    </location>
    <ligand>
        <name>AMP</name>
        <dbReference type="ChEBI" id="CHEBI:456215"/>
    </ligand>
</feature>
<feature type="binding site" evidence="1">
    <location>
        <begin position="85"/>
        <end position="88"/>
    </location>
    <ligand>
        <name>AMP</name>
        <dbReference type="ChEBI" id="CHEBI:456215"/>
    </ligand>
</feature>
<feature type="binding site" evidence="1">
    <location>
        <position position="92"/>
    </location>
    <ligand>
        <name>AMP</name>
        <dbReference type="ChEBI" id="CHEBI:456215"/>
    </ligand>
</feature>
<feature type="binding site" evidence="1">
    <location>
        <position position="123"/>
    </location>
    <ligand>
        <name>ATP</name>
        <dbReference type="ChEBI" id="CHEBI:30616"/>
    </ligand>
</feature>
<feature type="binding site" evidence="1">
    <location>
        <begin position="132"/>
        <end position="133"/>
    </location>
    <ligand>
        <name>ATP</name>
        <dbReference type="ChEBI" id="CHEBI:30616"/>
    </ligand>
</feature>
<feature type="binding site" evidence="1">
    <location>
        <position position="156"/>
    </location>
    <ligand>
        <name>AMP</name>
        <dbReference type="ChEBI" id="CHEBI:456215"/>
    </ligand>
</feature>
<feature type="binding site" evidence="1">
    <location>
        <position position="167"/>
    </location>
    <ligand>
        <name>AMP</name>
        <dbReference type="ChEBI" id="CHEBI:456215"/>
    </ligand>
</feature>
<feature type="binding site" evidence="1">
    <location>
        <position position="201"/>
    </location>
    <ligand>
        <name>ATP</name>
        <dbReference type="ChEBI" id="CHEBI:30616"/>
    </ligand>
</feature>
<sequence length="215" mass="23290">MRVILLGAPGAGKGTQARYITEKFGIPQISTGDMLRAAVKAGTELGLKAKSVMDAGGLVSDDLIINLVKERIAQPDCANGFLFDGFPRTIPQAEALRDAGVTLDHVVEIAVDDEEIVKRLSGRRVHPASGRVYHTEYNPPKVAGKDDVSGEELVQREDDKEETVRHRLSVYHSQTKPLVDFYQKLSAETGTPKYSHIPGVGSVEDITAKTLAALD</sequence>